<accession>P26809</accession>
<comment type="function">
    <molecule>Gag-Pol polyprotein</molecule>
    <text evidence="1">Plays a role in budding and is processed by the viral protease during virion maturation outside the cell. During budding, it recruits, in a PPXY-dependent or independent manner, Nedd4-like ubiquitin ligases that conjugate ubiquitin molecules to Gag-Pol, or to Gag-Pol binding host factors. Interaction with HECT ubiquitin ligases probably links the viral protein to the host ESCRT pathway and facilitates release.</text>
</comment>
<comment type="function">
    <molecule>Matrix protein p15</molecule>
    <text evidence="1">Targets Gag and gag-pol polyproteins to the plasma membrane via a multipartite membrane binding signal, that includes its myristoylated N-terminus. Also mediates nuclear localization of the pre-integration complex.</text>
</comment>
<comment type="function">
    <molecule>RNA-binding phosphoprotein p12</molecule>
    <text evidence="3">Constituent of the pre-integration complex (PIC) which tethers the latter to mitotic chromosomes. This allows the integration of the viral genome into the host DNA.</text>
</comment>
<comment type="function">
    <molecule>Capsid protein p30</molecule>
    <text evidence="2">Forms the spherical core of the virion that encapsulates the genomic RNA-nucleocapsid complex.</text>
</comment>
<comment type="function">
    <molecule>Nucleocapsid protein p10-Pol</molecule>
    <text evidence="1 3">Involved in the packaging and encapsidation of two copies of the genome. Binds with high affinity to conserved UCUG elements within the packaging signal, located near the 5'-end of the genome. This binding is dependent on genome dimerization. Acts as a nucleic acid chaperone which is involved in rearrangement of nucleic acid secondary structures during gRNA retrotranscription.</text>
</comment>
<comment type="function">
    <molecule>Protease</molecule>
    <text evidence="1 7">The aspartyl protease mediates proteolytic cleavages of Gag and Gag-Pol polyproteins during or shortly after the release of the virion from the plasma membrane. Cleavages take place as an ordered, step-wise cascade to yield mature proteins. This process is called maturation. Displays maximal activity during the budding process just prior to particle release from the cell (Potential). Cleaves the translation initiation factor eIF4G leading to the inhibition of host cap-dependent translation (By similarity).</text>
</comment>
<comment type="function">
    <molecule>Reverse transcriptase/ribonuclease H</molecule>
    <text evidence="5">RT is a multifunctional enzyme that converts the viral dimeric RNA genome into dsDNA in the cytoplasm, shortly after virus entry into the cell. This enzyme displays a DNA polymerase activity that can copy either DNA or RNA templates, and a ribonuclease H (RNase H) activity that cleaves the RNA strand of RNA-DNA heteroduplexes in a partially processive 3' to 5' endonucleasic mode. Conversion of viral genomic RNA into dsDNA requires many steps. A tRNA binds to the primer-binding site (PBS) situated at the 5' end of the viral RNA. RT uses the 3' end of the tRNA primer to perform a short round of RNA-dependent minus-strand DNA synthesis. The reading proceeds through the U5 region and ends after the repeated (R) region which is present at both ends of viral RNA. The portion of the RNA-DNA heteroduplex is digested by the RNase H, resulting in a ssDNA product attached to the tRNA primer. This ssDNA/tRNA hybridizes with the identical R region situated at the 3' end of viral RNA. This template exchange, known as minus-strand DNA strong stop transfer, can be either intra- or intermolecular. RT uses the 3' end of this newly synthesized short ssDNA to perform the RNA-dependent minus-strand DNA synthesis of the whole template. RNase H digests the RNA template except for a polypurine tract (PPT) situated at the 5' end of the genome. It is not clear if both polymerase and RNase H activities are simultaneous. RNase H probably can proceed both in a polymerase-dependent (RNA cut into small fragments by the same RT performing DNA synthesis) and a polymerase-independent mode (cleavage of remaining RNA fragments by free RTs). Secondly, RT performs DNA-directed plus-strand DNA synthesis using the PPT that has not been removed by RNase H as primers. PPT and tRNA primers are then removed by RNase H. The 3' and 5' ssDNA PBS regions hybridize to form a circular dsDNA intermediate. Strand displacement synthesis by RT to the PBS and PPT ends produces a blunt ended, linear dsDNA copy of the viral genome that includes long terminal repeats (LTRs) at both ends.</text>
</comment>
<comment type="function">
    <molecule>Integrase</molecule>
    <text evidence="3">Catalyzes viral DNA integration into the host chromosome, by performing a series of DNA cutting and joining reactions. This enzyme activity takes place after virion entry into a cell and reverse transcription of the RNA genome in dsDNA. The first step in the integration process is 3' processing. This step requires a complex comprising the viral genome, matrix protein and integrase. This complex is called the pre-integration complex (PIC). The integrase protein removes 2 nucleotides from each 3' end of the viral DNA, leaving recessed CA OH's at the 3' ends. In the second step that requires cell division, the PIC enters cell nucleus. In the third step, termed strand transfer, the integrase protein joins the previously processed 3' ends to the 5' ends of strands of target cellular DNA at the site of integration. The last step is viral DNA integration into host chromosome.</text>
</comment>
<comment type="catalytic activity">
    <reaction evidence="8">
        <text>DNA(n) + a 2'-deoxyribonucleoside 5'-triphosphate = DNA(n+1) + diphosphate</text>
        <dbReference type="Rhea" id="RHEA:22508"/>
        <dbReference type="Rhea" id="RHEA-COMP:17339"/>
        <dbReference type="Rhea" id="RHEA-COMP:17340"/>
        <dbReference type="ChEBI" id="CHEBI:33019"/>
        <dbReference type="ChEBI" id="CHEBI:61560"/>
        <dbReference type="ChEBI" id="CHEBI:173112"/>
        <dbReference type="EC" id="2.7.7.49"/>
    </reaction>
</comment>
<comment type="catalytic activity">
    <reaction evidence="8">
        <text>DNA(n) + a 2'-deoxyribonucleoside 5'-triphosphate = DNA(n+1) + diphosphate</text>
        <dbReference type="Rhea" id="RHEA:22508"/>
        <dbReference type="Rhea" id="RHEA-COMP:17339"/>
        <dbReference type="Rhea" id="RHEA-COMP:17340"/>
        <dbReference type="ChEBI" id="CHEBI:33019"/>
        <dbReference type="ChEBI" id="CHEBI:61560"/>
        <dbReference type="ChEBI" id="CHEBI:173112"/>
        <dbReference type="EC" id="2.7.7.7"/>
    </reaction>
</comment>
<comment type="catalytic activity">
    <reaction evidence="9">
        <text>Endonucleolytic cleavage to 5'-phosphomonoester.</text>
        <dbReference type="EC" id="3.1.26.4"/>
    </reaction>
</comment>
<comment type="cofactor">
    <cofactor evidence="8">
        <name>Mg(2+)</name>
        <dbReference type="ChEBI" id="CHEBI:18420"/>
    </cofactor>
    <text evidence="8">The RT polymerase active site binds 2 magnesium ions.</text>
</comment>
<comment type="cofactor">
    <cofactor evidence="3">
        <name>Mg(2+)</name>
        <dbReference type="ChEBI" id="CHEBI:18420"/>
    </cofactor>
    <text evidence="3">Binds 1 magnesium ion for ribonuclease H (RNase H) activity.</text>
</comment>
<comment type="cofactor">
    <cofactor evidence="3">
        <name>Mg(2+)</name>
        <dbReference type="ChEBI" id="CHEBI:18420"/>
    </cofactor>
    <text evidence="3">Magnesium ions are required for integrase activity. Binds at least 1, maybe 2 magnesium ions.</text>
</comment>
<comment type="activity regulation">
    <molecule>Protease</molecule>
    <text evidence="3">Most efficiently inhibited by Amprenavir, which is able to block Gag-Pol processing in infected cells.</text>
</comment>
<comment type="subunit">
    <molecule>Capsid protein p30</molecule>
    <text evidence="3">Homohexamer; further associates as homomultimer (By similarity). The virus core is composed of a lattice formed from hexagonal rings, each containing six capsid monomers (By similarity).</text>
</comment>
<comment type="subunit">
    <molecule>Gag-Pol polyprotein</molecule>
    <text evidence="3">Interacts (via PPXY motif) with host NEDD4 (By similarity). Interacts (via PSAP motif) with host TSG101 (By similarity). Interacts (via LYPX(n)L motif) with host PDCD6IP (By similarity).</text>
</comment>
<comment type="subunit">
    <molecule>Reverse transcriptase/ribonuclease H</molecule>
    <text evidence="3 12">The reverse transcriptase is a monomer (Potential). Interacts (via RNase domains) with host release factor ETF1; this interaction is essential for translational readthrough of amber codon between viral gag and pol genes, as well as for viral replication (By similarity).</text>
</comment>
<comment type="subunit">
    <molecule>Integrase</molecule>
    <text evidence="3">Homodimer (By similarity).</text>
</comment>
<comment type="subcellular location">
    <molecule>Gag-Pol polyprotein</molecule>
    <subcellularLocation>
        <location evidence="1">Virion</location>
    </subcellularLocation>
    <subcellularLocation>
        <location evidence="1">Host cell membrane</location>
        <topology evidence="1">Lipid-anchor</topology>
    </subcellularLocation>
    <subcellularLocation>
        <location evidence="1">Host late endosome membrane</location>
        <topology evidence="1">Lipid-anchor</topology>
    </subcellularLocation>
    <subcellularLocation>
        <location evidence="4">Host endosome</location>
        <location evidence="4">Host multivesicular body</location>
    </subcellularLocation>
    <text evidence="3">These locations are probably linked to virus assembly sites.</text>
</comment>
<comment type="subcellular location">
    <molecule>Matrix protein p15</molecule>
    <subcellularLocation>
        <location evidence="3">Virion</location>
    </subcellularLocation>
</comment>
<comment type="subcellular location">
    <molecule>Capsid protein p30</molecule>
    <subcellularLocation>
        <location evidence="3">Virion</location>
    </subcellularLocation>
</comment>
<comment type="subcellular location">
    <molecule>Nucleocapsid protein p10-Pol</molecule>
    <subcellularLocation>
        <location evidence="3">Virion</location>
    </subcellularLocation>
</comment>
<comment type="subcellular location">
    <molecule>Protease</molecule>
    <subcellularLocation>
        <location evidence="3">Virion</location>
    </subcellularLocation>
</comment>
<comment type="subcellular location">
    <molecule>RNA-binding phosphoprotein p12</molecule>
    <subcellularLocation>
        <location evidence="3">Host cytoplasm</location>
    </subcellularLocation>
    <text evidence="3">Localizes to the host cytoplasm early in infection and binds to the mitotic chromosomes later on.</text>
</comment>
<comment type="domain">
    <molecule>Gag-Pol polyprotein</molecule>
    <text evidence="1">Late-budding domains (L domains) are short sequence motifs essential for viral particle release. They can occur individually or in close proximity within structural proteins. They interacts with sorting cellular proteins of the multivesicular body (MVB) pathway. Most of these proteins are class E vacuolar protein sorting factors belonging to ESCRT-I, ESCRT-II or ESCRT-III complexes. RNA-binding phosphoprotein p12 contains one L domain: a PPXY motif which potentially interacts with the WW domain 3 of NEDD4 E3 ubiquitin ligase. PPXY motif is essential for virus egress. Matrix protein p15 contains one L domain: a PTAP/PSAP motif, which potentially interacts with the UEV domain of TSG101. The junction between the matrix protein p15 and RNA-binding phosphoprotein p12 also contains one L domain: a LYPX(n)L motif which potentially interacts with PDCD6IP. Both PSAP and LYPX(n)L domains might play little to no role in budding and possibly drive residual virus release. contains.</text>
</comment>
<comment type="PTM">
    <molecule>Gag-Pol polyprotein</molecule>
    <text evidence="1">Ubiquitinated by ITCH. Gag can recruit the ubiquitin ligase Itch in an L domain-independent manner to facilitate virus release via a mechanism that involves Gag ubiquitination.</text>
</comment>
<comment type="PTM">
    <molecule>Gag-Pol polyprotein</molecule>
    <text evidence="3">Specific enzymatic cleavages by the viral protease yield mature proteins. The protease is released by autocatalytic cleavage. The polyprotein is cleaved during and after budding, this process is termed maturation.</text>
</comment>
<comment type="PTM">
    <molecule>Capsid protein p30</molecule>
    <text evidence="3">Sumoylated; which is required for virus replication.</text>
</comment>
<comment type="PTM">
    <molecule>RNA-binding phosphoprotein p12</molecule>
    <text evidence="3">Phosphorylated on serine residues.</text>
</comment>
<comment type="miscellaneous">
    <molecule>Gag-Pol polyprotein</molecule>
    <text evidence="3">This protein is translated as a gag-pol fusion protein by episodic readthrough of the gag protein termination codon. Readthrough of the terminator codon TAG occurs between the codons for 538-Asp and 540-Gly.</text>
</comment>
<comment type="miscellaneous">
    <molecule>Nucleocapsid protein p10-Pol</molecule>
    <text evidence="3">Nucleocapsid protein p10-Pol released from Pol polyprotein (NC-pol) is a few amino acids shorter than the nucleocapsid protein p10 released from Gag polyprotein (NC-gag).</text>
</comment>
<comment type="miscellaneous">
    <molecule>Reverse transcriptase/ribonuclease H</molecule>
    <text evidence="8">The reverse transcriptase is an error-prone enzyme that lacks a proof-reading function. High mutations rate is a direct consequence of this characteristic. RT also displays frequent template switching leading to high recombination rate. Recombination mostly occurs between homologous regions of the two copackaged RNA genomes. If these two RNA molecules derive from different viral strains, reverse transcription will give rise to highly recombinated proviral DNAs.</text>
</comment>
<comment type="similarity">
    <text evidence="12">Belongs to the retroviral Pol polyprotein family.</text>
</comment>
<gene>
    <name type="primary">pol</name>
</gene>
<feature type="initiator methionine" description="Removed; by host" evidence="5">
    <location>
        <position position="1"/>
    </location>
</feature>
<feature type="chain" id="PRO_0000259728" description="Gag-Pol polyprotein">
    <location>
        <begin position="2"/>
        <end position="1738"/>
    </location>
</feature>
<feature type="chain" id="PRO_0000442895" description="Matrix protein p15">
    <location>
        <begin position="2"/>
        <end position="131"/>
    </location>
</feature>
<feature type="chain" id="PRO_0000442896" description="RNA-binding phosphoprotein p12">
    <location>
        <begin position="132"/>
        <end position="215"/>
    </location>
</feature>
<feature type="chain" id="PRO_0000442897" description="Capsid protein p30">
    <location>
        <begin position="216"/>
        <end position="478"/>
    </location>
</feature>
<feature type="chain" id="PRO_0000442898" description="Nucleocapsid protein p10-Pol">
    <location>
        <begin position="479"/>
        <end position="534"/>
    </location>
</feature>
<feature type="chain" id="PRO_0000026131" description="Protease">
    <location>
        <begin position="535"/>
        <end position="659"/>
    </location>
</feature>
<feature type="chain" id="PRO_0000259729" description="Reverse transcriptase/ribonuclease H">
    <location>
        <begin position="660"/>
        <end position="1330"/>
    </location>
</feature>
<feature type="chain" id="PRO_0000259730" description="Integrase">
    <location>
        <begin position="1331"/>
        <end position="1738"/>
    </location>
</feature>
<feature type="domain" description="Peptidase A2" evidence="7">
    <location>
        <begin position="561"/>
        <end position="631"/>
    </location>
</feature>
<feature type="domain" description="Reverse transcriptase" evidence="8">
    <location>
        <begin position="741"/>
        <end position="932"/>
    </location>
</feature>
<feature type="domain" description="RNase H type-1" evidence="9">
    <location>
        <begin position="1174"/>
        <end position="1320"/>
    </location>
</feature>
<feature type="domain" description="Integrase catalytic" evidence="10">
    <location>
        <begin position="1444"/>
        <end position="1602"/>
    </location>
</feature>
<feature type="zinc finger region" description="CCHC-type" evidence="6">
    <location>
        <begin position="502"/>
        <end position="519"/>
    </location>
</feature>
<feature type="zinc finger region" description="HHCC-type" evidence="3">
    <location>
        <begin position="1387"/>
        <end position="1427"/>
    </location>
</feature>
<feature type="region of interest" description="Disordered" evidence="11">
    <location>
        <begin position="110"/>
        <end position="218"/>
    </location>
</feature>
<feature type="region of interest" description="Interaction with host PIAS4" evidence="1">
    <location>
        <begin position="345"/>
        <end position="393"/>
    </location>
</feature>
<feature type="region of interest" description="Interaction with host UBE2I" evidence="1">
    <location>
        <begin position="430"/>
        <end position="435"/>
    </location>
</feature>
<feature type="region of interest" description="Disordered" evidence="11">
    <location>
        <begin position="434"/>
        <end position="499"/>
    </location>
</feature>
<feature type="region of interest" description="Disordered" evidence="11">
    <location>
        <begin position="513"/>
        <end position="553"/>
    </location>
</feature>
<feature type="coiled-coil region" evidence="5">
    <location>
        <begin position="438"/>
        <end position="478"/>
    </location>
</feature>
<feature type="short sequence motif" description="PTAP/PSAP motif" evidence="1">
    <location>
        <begin position="111"/>
        <end position="114"/>
    </location>
</feature>
<feature type="short sequence motif" description="LYPX(n)L motif" evidence="1">
    <location>
        <begin position="130"/>
        <end position="134"/>
    </location>
</feature>
<feature type="short sequence motif" description="PPXY motif" evidence="1">
    <location>
        <begin position="162"/>
        <end position="165"/>
    </location>
</feature>
<feature type="compositionally biased region" description="Pro residues" evidence="11">
    <location>
        <begin position="110"/>
        <end position="124"/>
    </location>
</feature>
<feature type="compositionally biased region" description="Pro residues" evidence="11">
    <location>
        <begin position="161"/>
        <end position="173"/>
    </location>
</feature>
<feature type="compositionally biased region" description="Basic and acidic residues" evidence="11">
    <location>
        <begin position="434"/>
        <end position="466"/>
    </location>
</feature>
<feature type="compositionally biased region" description="Basic and acidic residues" evidence="11">
    <location>
        <begin position="486"/>
        <end position="499"/>
    </location>
</feature>
<feature type="active site" description="Protease; shared with dimeric partner" evidence="7">
    <location>
        <position position="566"/>
    </location>
</feature>
<feature type="binding site" evidence="8">
    <location>
        <position position="809"/>
    </location>
    <ligand>
        <name>Mg(2+)</name>
        <dbReference type="ChEBI" id="CHEBI:18420"/>
        <label>1</label>
        <note>catalytic; for reverse transcriptase activity</note>
    </ligand>
</feature>
<feature type="binding site" evidence="8">
    <location>
        <position position="883"/>
    </location>
    <ligand>
        <name>Mg(2+)</name>
        <dbReference type="ChEBI" id="CHEBI:18420"/>
        <label>1</label>
        <note>catalytic; for reverse transcriptase activity</note>
    </ligand>
</feature>
<feature type="binding site" evidence="8">
    <location>
        <position position="884"/>
    </location>
    <ligand>
        <name>Mg(2+)</name>
        <dbReference type="ChEBI" id="CHEBI:18420"/>
        <label>1</label>
        <note>catalytic; for reverse transcriptase activity</note>
    </ligand>
</feature>
<feature type="binding site" evidence="9">
    <location>
        <position position="1183"/>
    </location>
    <ligand>
        <name>Mg(2+)</name>
        <dbReference type="ChEBI" id="CHEBI:18420"/>
        <label>2</label>
        <note>catalytic; for RNase H activity</note>
    </ligand>
</feature>
<feature type="binding site" evidence="9">
    <location>
        <position position="1221"/>
    </location>
    <ligand>
        <name>Mg(2+)</name>
        <dbReference type="ChEBI" id="CHEBI:18420"/>
        <label>2</label>
        <note>catalytic; for RNase H activity</note>
    </ligand>
</feature>
<feature type="binding site" evidence="9">
    <location>
        <position position="1242"/>
    </location>
    <ligand>
        <name>Mg(2+)</name>
        <dbReference type="ChEBI" id="CHEBI:18420"/>
        <label>2</label>
        <note>catalytic; for RNase H activity</note>
    </ligand>
</feature>
<feature type="binding site" evidence="9">
    <location>
        <position position="1312"/>
    </location>
    <ligand>
        <name>Mg(2+)</name>
        <dbReference type="ChEBI" id="CHEBI:18420"/>
        <label>2</label>
        <note>catalytic; for RNase H activity</note>
    </ligand>
</feature>
<feature type="binding site" evidence="10">
    <location>
        <position position="1455"/>
    </location>
    <ligand>
        <name>Mg(2+)</name>
        <dbReference type="ChEBI" id="CHEBI:18420"/>
        <label>3</label>
        <note>catalytic; for integrase activity</note>
    </ligand>
</feature>
<feature type="binding site" evidence="10">
    <location>
        <position position="1514"/>
    </location>
    <ligand>
        <name>Mg(2+)</name>
        <dbReference type="ChEBI" id="CHEBI:18420"/>
        <label>3</label>
        <note>catalytic; for integrase activity</note>
    </ligand>
</feature>
<feature type="site" description="Cleavage; by viral protease" evidence="3">
    <location>
        <begin position="131"/>
        <end position="132"/>
    </location>
</feature>
<feature type="site" description="Cleavage; by viral protease" evidence="3">
    <location>
        <begin position="215"/>
        <end position="216"/>
    </location>
</feature>
<feature type="site" description="Cleavage; by viral protease" evidence="3">
    <location>
        <begin position="478"/>
        <end position="479"/>
    </location>
</feature>
<feature type="site" description="Cleavage; by viral protease" evidence="3">
    <location>
        <begin position="534"/>
        <end position="535"/>
    </location>
</feature>
<feature type="site" description="Cleavage; by viral protease" evidence="3">
    <location>
        <begin position="659"/>
        <end position="660"/>
    </location>
</feature>
<feature type="site" description="Cleavage; by viral protease" evidence="3">
    <location>
        <begin position="1330"/>
        <end position="1331"/>
    </location>
</feature>
<feature type="modified residue" description="Phosphoserine; by host" evidence="3">
    <location>
        <position position="192"/>
    </location>
</feature>
<feature type="lipid moiety-binding region" description="N-myristoyl glycine; by host" evidence="5">
    <location>
        <position position="2"/>
    </location>
</feature>
<proteinExistence type="inferred from homology"/>
<reference key="1">
    <citation type="journal article" date="1991" name="Nucleic Acids Res.">
        <title>Complete nucleotide sequence of Friend murine leukemia virus, strain FB29.</title>
        <authorList>
            <person name="Perryman S."/>
            <person name="Nishio J."/>
            <person name="Chesebro B."/>
        </authorList>
    </citation>
    <scope>NUCLEOTIDE SEQUENCE [GENOMIC DNA]</scope>
</reference>
<sequence>MGQAVTTPLSLTLDHWKDVERTAHNLSVEVRKRRWVTFCSAEWPTFNVGWPRDGTFNPDIITQVKIKVFSPGPHGHPDQVPYIVTWEAIAVDPPPWVRPFVHPKPPLSLPPSAPSLPPEPPLSTPPQSSLYPALTSPLNTKPRPQVLPDSGGPLIDLLTEDPPPYRDPGPPSPDGNGDSGEVAPTEGAPDPSPMVSRLRGRKEPPVADSTTSQAFPLRLGGNGQYQYWPFSSSDLYNWKNNNPSFSEDPAKLTALIESVLLTHQPTWDDCQQLLGTLLTGEEKQRVLLEARKAVRGEDGRPTQLPNDINDAFPLERPDWDYNTQRGRNHLVHYRQLLLAGLQNAGRSPTNLAKVKGITQGPNESPSAFLERLKEAYRRYTPYDPEDPGQETNVAMSFIWQSAPDIGRKLERLEDLKSKTLGDLVREAEKIFNKRETPEEREERIRRETEEKEERRRAEDVQREKERDRRRHREMSKLLATVVSGQRQDRQGGERRRPQLDHDQCAYCKEKGHWARDCPKKPRGPRGPRPQASLLTLDDQGGQGQEPPPEPRITLRVGGQPVTFLVDTGAQHSVLTQNPGPLSDKSAWVQGATGGKRYRWTTDRRVHLATGKVTHSFLHVPDCPYPLLGRDLLTKLKAQIHFEGSGAQVVGPMGQPLQVLTLNIEDEYRLHETSKGPDVPLGSTWLSDFPQAWAETGGMGLAVRQAPLIIPLKATSTPVSIKQYPMSQEARLGIKPHIQRLLDQGILVPCQSPWNTPLLPVKKPGTNDYRPVQDLREVNKRVEDIHPTVPNPYNLLSGLPPSHQWYTVLDLKDAFFCLRLHPTSQSLFAFEWRDPEMGISGQLTWTRLPQGFKNSPTLFDEALHRDLADFRIQHPDLILLQYVDDLLLAATSELDCQQGTRALLQTLGDLGYRASAKKAQICQKQVKYLGYLLKEGQRWLTEARKETVMGQPTPKTPRQLREFLGTAGFCRLWIPGFAEMAAPLYPLTKTGTLFEWGPDQQKAYQEIKQALLTAPALGLPDLTKPFELFVDEKQGYAKGVLTQKLGPWRRPVAYLSKKLDPVAAGWPPCLRMVAAIAVLTKDAGKLTMGQPLVILAPHAVEALVKQPPDRWLSNARMTHYQALLLDTDRVQFGPIVALNPATLLPLPEEGLQHDCLDILAEAHGTRPDLTDQPLPDADHTWYTDGSSFLQEGQRKAGAAVTTETEVVWAKALPAGTSAQRAELIALTQALKMAEGKKLNVYTDSRYAFATAHIHGEIYRRRGLLTSEGKEIKNKDEILALLKALFLPKRLSIIHCPGHQKGNRAEARGNRMADQAAREVATRETPETSTLLIENSAPYTHEHFHYTVTDIKDLTKLGATYDDAKKCWVYQGKPVMPDQFTFELLDFLHQLTHLSFSKTKALLERNYCPYYMLNRDRTLKDITETCQACAQVNASKSAVKQGTRVRGHRPGTHWEIDFTEVKPGLYGYKYLLVFIDTFSGWVEAFPTKKETAKVVTKKLLEEIFPRFGMPQVLGTDNGPAFVSKVSQTVADLLGVDWKLHCAYRPQSSGQVERMNRTIKETLTKLTLATGSRDWVLLLPLALYRARNTPGPHGLTPYEILYGAPPPLVNFPDPDMAKVTHNPSLQAHLQALYLVQHEVWRPLAAAYQEQLDRPVVPHPFRVGDTVWVRRHQTKNLEPRWKGPYTVLLTTPTALKVDGIAAWIHAAHVKAADTRIEPPSESTWRVQRSQNPLKIRLTRGTS</sequence>
<organismHost>
    <name type="scientific">Mus musculus</name>
    <name type="common">Mouse</name>
    <dbReference type="NCBI Taxonomy" id="10090"/>
</organismHost>
<evidence type="ECO:0000250" key="1">
    <source>
        <dbReference type="UniProtKB" id="P03332"/>
    </source>
</evidence>
<evidence type="ECO:0000250" key="2">
    <source>
        <dbReference type="UniProtKB" id="P03336"/>
    </source>
</evidence>
<evidence type="ECO:0000250" key="3">
    <source>
        <dbReference type="UniProtKB" id="P03355"/>
    </source>
</evidence>
<evidence type="ECO:0000250" key="4">
    <source>
        <dbReference type="UniProtKB" id="P26807"/>
    </source>
</evidence>
<evidence type="ECO:0000255" key="5"/>
<evidence type="ECO:0000255" key="6">
    <source>
        <dbReference type="PROSITE-ProRule" id="PRU00047"/>
    </source>
</evidence>
<evidence type="ECO:0000255" key="7">
    <source>
        <dbReference type="PROSITE-ProRule" id="PRU00275"/>
    </source>
</evidence>
<evidence type="ECO:0000255" key="8">
    <source>
        <dbReference type="PROSITE-ProRule" id="PRU00405"/>
    </source>
</evidence>
<evidence type="ECO:0000255" key="9">
    <source>
        <dbReference type="PROSITE-ProRule" id="PRU00408"/>
    </source>
</evidence>
<evidence type="ECO:0000255" key="10">
    <source>
        <dbReference type="PROSITE-ProRule" id="PRU00457"/>
    </source>
</evidence>
<evidence type="ECO:0000256" key="11">
    <source>
        <dbReference type="SAM" id="MobiDB-lite"/>
    </source>
</evidence>
<evidence type="ECO:0000305" key="12"/>
<keyword id="KW-0064">Aspartyl protease</keyword>
<keyword id="KW-0167">Capsid protein</keyword>
<keyword id="KW-0175">Coiled coil</keyword>
<keyword id="KW-0229">DNA integration</keyword>
<keyword id="KW-0233">DNA recombination</keyword>
<keyword id="KW-0238">DNA-binding</keyword>
<keyword id="KW-0239">DNA-directed DNA polymerase</keyword>
<keyword id="KW-0255">Endonuclease</keyword>
<keyword id="KW-1262">Eukaryotic host gene expression shutoff by virus</keyword>
<keyword id="KW-1193">Eukaryotic host translation shutoff by virus</keyword>
<keyword id="KW-1032">Host cell membrane</keyword>
<keyword id="KW-1035">Host cytoplasm</keyword>
<keyword id="KW-1039">Host endosome</keyword>
<keyword id="KW-1190">Host gene expression shutoff by virus</keyword>
<keyword id="KW-1043">Host membrane</keyword>
<keyword id="KW-0945">Host-virus interaction</keyword>
<keyword id="KW-0378">Hydrolase</keyword>
<keyword id="KW-0449">Lipoprotein</keyword>
<keyword id="KW-0460">Magnesium</keyword>
<keyword id="KW-0472">Membrane</keyword>
<keyword id="KW-0479">Metal-binding</keyword>
<keyword id="KW-0511">Multifunctional enzyme</keyword>
<keyword id="KW-0519">Myristate</keyword>
<keyword id="KW-0540">Nuclease</keyword>
<keyword id="KW-0548">Nucleotidyltransferase</keyword>
<keyword id="KW-0597">Phosphoprotein</keyword>
<keyword id="KW-0645">Protease</keyword>
<keyword id="KW-1159">RNA suppression of termination</keyword>
<keyword id="KW-0694">RNA-binding</keyword>
<keyword id="KW-0695">RNA-directed DNA polymerase</keyword>
<keyword id="KW-0808">Transferase</keyword>
<keyword id="KW-0832">Ubl conjugation</keyword>
<keyword id="KW-1179">Viral genome integration</keyword>
<keyword id="KW-0468">Viral matrix protein</keyword>
<keyword id="KW-0543">Viral nucleoprotein</keyword>
<keyword id="KW-0946">Virion</keyword>
<keyword id="KW-1160">Virus entry into host cell</keyword>
<keyword id="KW-0862">Zinc</keyword>
<keyword id="KW-0863">Zinc-finger</keyword>
<protein>
    <recommendedName>
        <fullName>Gag-Pol polyprotein</fullName>
    </recommendedName>
    <component>
        <recommendedName>
            <fullName>Matrix protein p15</fullName>
        </recommendedName>
    </component>
    <component>
        <recommendedName>
            <fullName>RNA-binding phosphoprotein p12</fullName>
        </recommendedName>
        <alternativeName>
            <fullName>pp12</fullName>
        </alternativeName>
    </component>
    <component>
        <recommendedName>
            <fullName>Capsid protein p30</fullName>
        </recommendedName>
    </component>
    <component>
        <recommendedName>
            <fullName>Nucleocapsid protein p10-Pol</fullName>
            <shortName>NC-pol</shortName>
        </recommendedName>
    </component>
    <component>
        <recommendedName>
            <fullName>Protease</fullName>
            <ecNumber evidence="7">3.4.23.-</ecNumber>
        </recommendedName>
    </component>
    <component>
        <recommendedName>
            <fullName>Reverse transcriptase/ribonuclease H</fullName>
            <shortName>RT</shortName>
            <ecNumber evidence="8">2.7.7.49</ecNumber>
            <ecNumber evidence="8">2.7.7.7</ecNumber>
            <ecNumber evidence="9">3.1.26.4</ecNumber>
        </recommendedName>
    </component>
    <component>
        <recommendedName>
            <fullName>Integrase</fullName>
            <shortName>IN</shortName>
            <ecNumber evidence="3">2.7.7.-</ecNumber>
            <ecNumber evidence="3">3.1.-.-</ecNumber>
        </recommendedName>
    </component>
</protein>
<name>POL_MLVFF</name>
<dbReference type="EC" id="3.4.23.-" evidence="7"/>
<dbReference type="EC" id="2.7.7.49" evidence="8"/>
<dbReference type="EC" id="2.7.7.7" evidence="8"/>
<dbReference type="EC" id="3.1.26.4" evidence="9"/>
<dbReference type="EC" id="2.7.7.-" evidence="3"/>
<dbReference type="EC" id="3.1.-.-" evidence="3"/>
<dbReference type="EMBL" id="Z11128">
    <property type="protein sequence ID" value="CAA77477.1"/>
    <property type="molecule type" value="Genomic_DNA"/>
</dbReference>
<dbReference type="PIR" id="S70393">
    <property type="entry name" value="S70393"/>
</dbReference>
<dbReference type="RefSeq" id="NP_040333.1">
    <property type="nucleotide sequence ID" value="NC_001362.1"/>
</dbReference>
<dbReference type="SMR" id="P26809"/>
<dbReference type="GeneID" id="1491877"/>
<dbReference type="KEGG" id="vg:1491877"/>
<dbReference type="Proteomes" id="UP000008877">
    <property type="component" value="Segment"/>
</dbReference>
<dbReference type="GO" id="GO:0044185">
    <property type="term" value="C:host cell late endosome membrane"/>
    <property type="evidence" value="ECO:0007669"/>
    <property type="project" value="UniProtKB-SubCell"/>
</dbReference>
<dbReference type="GO" id="GO:0020002">
    <property type="term" value="C:host cell plasma membrane"/>
    <property type="evidence" value="ECO:0007669"/>
    <property type="project" value="UniProtKB-SubCell"/>
</dbReference>
<dbReference type="GO" id="GO:0072494">
    <property type="term" value="C:host multivesicular body"/>
    <property type="evidence" value="ECO:0007669"/>
    <property type="project" value="UniProtKB-SubCell"/>
</dbReference>
<dbReference type="GO" id="GO:0016020">
    <property type="term" value="C:membrane"/>
    <property type="evidence" value="ECO:0007669"/>
    <property type="project" value="UniProtKB-KW"/>
</dbReference>
<dbReference type="GO" id="GO:0019013">
    <property type="term" value="C:viral nucleocapsid"/>
    <property type="evidence" value="ECO:0007669"/>
    <property type="project" value="UniProtKB-KW"/>
</dbReference>
<dbReference type="GO" id="GO:0004190">
    <property type="term" value="F:aspartic-type endopeptidase activity"/>
    <property type="evidence" value="ECO:0007669"/>
    <property type="project" value="UniProtKB-KW"/>
</dbReference>
<dbReference type="GO" id="GO:0003677">
    <property type="term" value="F:DNA binding"/>
    <property type="evidence" value="ECO:0007669"/>
    <property type="project" value="UniProtKB-KW"/>
</dbReference>
<dbReference type="GO" id="GO:0003887">
    <property type="term" value="F:DNA-directed DNA polymerase activity"/>
    <property type="evidence" value="ECO:0007669"/>
    <property type="project" value="UniProtKB-KW"/>
</dbReference>
<dbReference type="GO" id="GO:0003723">
    <property type="term" value="F:RNA binding"/>
    <property type="evidence" value="ECO:0007669"/>
    <property type="project" value="UniProtKB-KW"/>
</dbReference>
<dbReference type="GO" id="GO:0003964">
    <property type="term" value="F:RNA-directed DNA polymerase activity"/>
    <property type="evidence" value="ECO:0007669"/>
    <property type="project" value="UniProtKB-KW"/>
</dbReference>
<dbReference type="GO" id="GO:0004523">
    <property type="term" value="F:RNA-DNA hybrid ribonuclease activity"/>
    <property type="evidence" value="ECO:0007669"/>
    <property type="project" value="UniProtKB-EC"/>
</dbReference>
<dbReference type="GO" id="GO:0039660">
    <property type="term" value="F:structural constituent of virion"/>
    <property type="evidence" value="ECO:0007669"/>
    <property type="project" value="UniProtKB-KW"/>
</dbReference>
<dbReference type="GO" id="GO:0008270">
    <property type="term" value="F:zinc ion binding"/>
    <property type="evidence" value="ECO:0007669"/>
    <property type="project" value="UniProtKB-KW"/>
</dbReference>
<dbReference type="GO" id="GO:0015074">
    <property type="term" value="P:DNA integration"/>
    <property type="evidence" value="ECO:0007669"/>
    <property type="project" value="UniProtKB-KW"/>
</dbReference>
<dbReference type="GO" id="GO:0006310">
    <property type="term" value="P:DNA recombination"/>
    <property type="evidence" value="ECO:0007669"/>
    <property type="project" value="UniProtKB-KW"/>
</dbReference>
<dbReference type="GO" id="GO:0075713">
    <property type="term" value="P:establishment of integrated proviral latency"/>
    <property type="evidence" value="ECO:0007669"/>
    <property type="project" value="UniProtKB-KW"/>
</dbReference>
<dbReference type="GO" id="GO:0006508">
    <property type="term" value="P:proteolysis"/>
    <property type="evidence" value="ECO:0007669"/>
    <property type="project" value="UniProtKB-KW"/>
</dbReference>
<dbReference type="GO" id="GO:0046718">
    <property type="term" value="P:symbiont entry into host cell"/>
    <property type="evidence" value="ECO:0007669"/>
    <property type="project" value="UniProtKB-KW"/>
</dbReference>
<dbReference type="GO" id="GO:0039657">
    <property type="term" value="P:symbiont-mediated suppression of host gene expression"/>
    <property type="evidence" value="ECO:0007669"/>
    <property type="project" value="UniProtKB-KW"/>
</dbReference>
<dbReference type="GO" id="GO:0044826">
    <property type="term" value="P:viral genome integration into host DNA"/>
    <property type="evidence" value="ECO:0007669"/>
    <property type="project" value="UniProtKB-KW"/>
</dbReference>
<dbReference type="GO" id="GO:0019068">
    <property type="term" value="P:virion assembly"/>
    <property type="evidence" value="ECO:0007669"/>
    <property type="project" value="InterPro"/>
</dbReference>
<dbReference type="CDD" id="cd09273">
    <property type="entry name" value="RNase_HI_RT_Bel"/>
    <property type="match status" value="1"/>
</dbReference>
<dbReference type="CDD" id="cd06095">
    <property type="entry name" value="RP_RTVL_H_like"/>
    <property type="match status" value="1"/>
</dbReference>
<dbReference type="CDD" id="cd03715">
    <property type="entry name" value="RT_ZFREV_like"/>
    <property type="match status" value="1"/>
</dbReference>
<dbReference type="FunFam" id="2.40.70.10:FF:000087">
    <property type="entry name" value="Gag-Pol polyprotein"/>
    <property type="match status" value="1"/>
</dbReference>
<dbReference type="FunFam" id="3.30.420.10:FF:000094">
    <property type="entry name" value="Gag-Pol polyprotein"/>
    <property type="match status" value="1"/>
</dbReference>
<dbReference type="FunFam" id="3.30.420.10:FF:000102">
    <property type="entry name" value="Gag-Pol polyprotein"/>
    <property type="match status" value="1"/>
</dbReference>
<dbReference type="FunFam" id="3.30.70.270:FF:000020">
    <property type="entry name" value="Transposon Tf2-6 polyprotein-like Protein"/>
    <property type="match status" value="1"/>
</dbReference>
<dbReference type="Gene3D" id="1.10.340.70">
    <property type="match status" value="1"/>
</dbReference>
<dbReference type="Gene3D" id="2.30.30.850">
    <property type="match status" value="1"/>
</dbReference>
<dbReference type="Gene3D" id="3.10.20.370">
    <property type="match status" value="1"/>
</dbReference>
<dbReference type="Gene3D" id="3.30.70.270">
    <property type="match status" value="2"/>
</dbReference>
<dbReference type="Gene3D" id="2.40.70.10">
    <property type="entry name" value="Acid Proteases"/>
    <property type="match status" value="1"/>
</dbReference>
<dbReference type="Gene3D" id="1.10.150.180">
    <property type="entry name" value="Gamma-retroviral matrix domain"/>
    <property type="match status" value="1"/>
</dbReference>
<dbReference type="Gene3D" id="3.10.10.10">
    <property type="entry name" value="HIV Type 1 Reverse Transcriptase, subunit A, domain 1"/>
    <property type="match status" value="1"/>
</dbReference>
<dbReference type="Gene3D" id="1.10.375.10">
    <property type="entry name" value="Human Immunodeficiency Virus Type 1 Capsid Protein"/>
    <property type="match status" value="1"/>
</dbReference>
<dbReference type="Gene3D" id="3.30.420.10">
    <property type="entry name" value="Ribonuclease H-like superfamily/Ribonuclease H"/>
    <property type="match status" value="2"/>
</dbReference>
<dbReference type="Gene3D" id="4.10.60.10">
    <property type="entry name" value="Zinc finger, CCHC-type"/>
    <property type="match status" value="1"/>
</dbReference>
<dbReference type="InterPro" id="IPR001969">
    <property type="entry name" value="Aspartic_peptidase_AS"/>
</dbReference>
<dbReference type="InterPro" id="IPR043502">
    <property type="entry name" value="DNA/RNA_pol_sf"/>
</dbReference>
<dbReference type="InterPro" id="IPR000840">
    <property type="entry name" value="G_retro_matrix"/>
</dbReference>
<dbReference type="InterPro" id="IPR036946">
    <property type="entry name" value="G_retro_matrix_sf"/>
</dbReference>
<dbReference type="InterPro" id="IPR039464">
    <property type="entry name" value="Gag-pol_Znf-H3C2"/>
</dbReference>
<dbReference type="InterPro" id="IPR002079">
    <property type="entry name" value="Gag_p12"/>
</dbReference>
<dbReference type="InterPro" id="IPR003036">
    <property type="entry name" value="Gag_P30"/>
</dbReference>
<dbReference type="InterPro" id="IPR001584">
    <property type="entry name" value="Integrase_cat-core"/>
</dbReference>
<dbReference type="InterPro" id="IPR040643">
    <property type="entry name" value="MLVIN_C"/>
</dbReference>
<dbReference type="InterPro" id="IPR001995">
    <property type="entry name" value="Peptidase_A2_cat"/>
</dbReference>
<dbReference type="InterPro" id="IPR021109">
    <property type="entry name" value="Peptidase_aspartic_dom_sf"/>
</dbReference>
<dbReference type="InterPro" id="IPR018061">
    <property type="entry name" value="Retropepsins"/>
</dbReference>
<dbReference type="InterPro" id="IPR008919">
    <property type="entry name" value="Retrov_capsid_N"/>
</dbReference>
<dbReference type="InterPro" id="IPR050462">
    <property type="entry name" value="Retroviral_Gag-Pol_poly"/>
</dbReference>
<dbReference type="InterPro" id="IPR010999">
    <property type="entry name" value="Retrovr_matrix"/>
</dbReference>
<dbReference type="InterPro" id="IPR043128">
    <property type="entry name" value="Rev_trsase/Diguanyl_cyclase"/>
</dbReference>
<dbReference type="InterPro" id="IPR012337">
    <property type="entry name" value="RNaseH-like_sf"/>
</dbReference>
<dbReference type="InterPro" id="IPR002156">
    <property type="entry name" value="RNaseH_domain"/>
</dbReference>
<dbReference type="InterPro" id="IPR036397">
    <property type="entry name" value="RNaseH_sf"/>
</dbReference>
<dbReference type="InterPro" id="IPR000477">
    <property type="entry name" value="RT_dom"/>
</dbReference>
<dbReference type="InterPro" id="IPR041577">
    <property type="entry name" value="RT_RNaseH_2"/>
</dbReference>
<dbReference type="InterPro" id="IPR001878">
    <property type="entry name" value="Znf_CCHC"/>
</dbReference>
<dbReference type="InterPro" id="IPR036875">
    <property type="entry name" value="Znf_CCHC_sf"/>
</dbReference>
<dbReference type="PANTHER" id="PTHR33166">
    <property type="entry name" value="GAG_P30 DOMAIN-CONTAINING PROTEIN"/>
    <property type="match status" value="1"/>
</dbReference>
<dbReference type="Pfam" id="PF01140">
    <property type="entry name" value="Gag_MA"/>
    <property type="match status" value="1"/>
</dbReference>
<dbReference type="Pfam" id="PF01141">
    <property type="entry name" value="Gag_p12"/>
    <property type="match status" value="1"/>
</dbReference>
<dbReference type="Pfam" id="PF02093">
    <property type="entry name" value="Gag_p30"/>
    <property type="match status" value="1"/>
</dbReference>
<dbReference type="Pfam" id="PF18697">
    <property type="entry name" value="MLVIN_C"/>
    <property type="match status" value="1"/>
</dbReference>
<dbReference type="Pfam" id="PF00075">
    <property type="entry name" value="RNase_H"/>
    <property type="match status" value="1"/>
</dbReference>
<dbReference type="Pfam" id="PF17919">
    <property type="entry name" value="RT_RNaseH_2"/>
    <property type="match status" value="1"/>
</dbReference>
<dbReference type="Pfam" id="PF00665">
    <property type="entry name" value="rve"/>
    <property type="match status" value="1"/>
</dbReference>
<dbReference type="Pfam" id="PF00077">
    <property type="entry name" value="RVP"/>
    <property type="match status" value="1"/>
</dbReference>
<dbReference type="Pfam" id="PF00078">
    <property type="entry name" value="RVT_1"/>
    <property type="match status" value="1"/>
</dbReference>
<dbReference type="Pfam" id="PF00098">
    <property type="entry name" value="zf-CCHC"/>
    <property type="match status" value="1"/>
</dbReference>
<dbReference type="Pfam" id="PF16721">
    <property type="entry name" value="zf-H3C2"/>
    <property type="match status" value="1"/>
</dbReference>
<dbReference type="SMART" id="SM00343">
    <property type="entry name" value="ZnF_C2HC"/>
    <property type="match status" value="1"/>
</dbReference>
<dbReference type="SUPFAM" id="SSF50630">
    <property type="entry name" value="Acid proteases"/>
    <property type="match status" value="1"/>
</dbReference>
<dbReference type="SUPFAM" id="SSF56672">
    <property type="entry name" value="DNA/RNA polymerases"/>
    <property type="match status" value="1"/>
</dbReference>
<dbReference type="SUPFAM" id="SSF47836">
    <property type="entry name" value="Retroviral matrix proteins"/>
    <property type="match status" value="1"/>
</dbReference>
<dbReference type="SUPFAM" id="SSF47943">
    <property type="entry name" value="Retrovirus capsid protein, N-terminal core domain"/>
    <property type="match status" value="1"/>
</dbReference>
<dbReference type="SUPFAM" id="SSF57756">
    <property type="entry name" value="Retrovirus zinc finger-like domains"/>
    <property type="match status" value="1"/>
</dbReference>
<dbReference type="SUPFAM" id="SSF53098">
    <property type="entry name" value="Ribonuclease H-like"/>
    <property type="match status" value="2"/>
</dbReference>
<dbReference type="PROSITE" id="PS50175">
    <property type="entry name" value="ASP_PROT_RETROV"/>
    <property type="match status" value="1"/>
</dbReference>
<dbReference type="PROSITE" id="PS00141">
    <property type="entry name" value="ASP_PROTEASE"/>
    <property type="match status" value="1"/>
</dbReference>
<dbReference type="PROSITE" id="PS50994">
    <property type="entry name" value="INTEGRASE"/>
    <property type="match status" value="1"/>
</dbReference>
<dbReference type="PROSITE" id="PS50879">
    <property type="entry name" value="RNASE_H_1"/>
    <property type="match status" value="1"/>
</dbReference>
<dbReference type="PROSITE" id="PS50878">
    <property type="entry name" value="RT_POL"/>
    <property type="match status" value="1"/>
</dbReference>
<dbReference type="PROSITE" id="PS50158">
    <property type="entry name" value="ZF_CCHC"/>
    <property type="match status" value="1"/>
</dbReference>
<organism>
    <name type="scientific">Friend murine leukemia virus (isolate FB29)</name>
    <name type="common">FrMLV</name>
    <dbReference type="NCBI Taxonomy" id="11797"/>
    <lineage>
        <taxon>Viruses</taxon>
        <taxon>Riboviria</taxon>
        <taxon>Pararnavirae</taxon>
        <taxon>Artverviricota</taxon>
        <taxon>Revtraviricetes</taxon>
        <taxon>Ortervirales</taxon>
        <taxon>Retroviridae</taxon>
        <taxon>Orthoretrovirinae</taxon>
        <taxon>Gammaretrovirus</taxon>
        <taxon>Murine leukemia virus</taxon>
    </lineage>
</organism>